<feature type="chain" id="PRO_0000127610" description="DASH complex subunit DAD1">
    <location>
        <begin position="1"/>
        <end position="95"/>
    </location>
</feature>
<reference key="1">
    <citation type="journal article" date="2004" name="Nature">
        <title>Genome evolution in yeasts.</title>
        <authorList>
            <person name="Dujon B."/>
            <person name="Sherman D."/>
            <person name="Fischer G."/>
            <person name="Durrens P."/>
            <person name="Casaregola S."/>
            <person name="Lafontaine I."/>
            <person name="de Montigny J."/>
            <person name="Marck C."/>
            <person name="Neuveglise C."/>
            <person name="Talla E."/>
            <person name="Goffard N."/>
            <person name="Frangeul L."/>
            <person name="Aigle M."/>
            <person name="Anthouard V."/>
            <person name="Babour A."/>
            <person name="Barbe V."/>
            <person name="Barnay S."/>
            <person name="Blanchin S."/>
            <person name="Beckerich J.-M."/>
            <person name="Beyne E."/>
            <person name="Bleykasten C."/>
            <person name="Boisrame A."/>
            <person name="Boyer J."/>
            <person name="Cattolico L."/>
            <person name="Confanioleri F."/>
            <person name="de Daruvar A."/>
            <person name="Despons L."/>
            <person name="Fabre E."/>
            <person name="Fairhead C."/>
            <person name="Ferry-Dumazet H."/>
            <person name="Groppi A."/>
            <person name="Hantraye F."/>
            <person name="Hennequin C."/>
            <person name="Jauniaux N."/>
            <person name="Joyet P."/>
            <person name="Kachouri R."/>
            <person name="Kerrest A."/>
            <person name="Koszul R."/>
            <person name="Lemaire M."/>
            <person name="Lesur I."/>
            <person name="Ma L."/>
            <person name="Muller H."/>
            <person name="Nicaud J.-M."/>
            <person name="Nikolski M."/>
            <person name="Oztas S."/>
            <person name="Ozier-Kalogeropoulos O."/>
            <person name="Pellenz S."/>
            <person name="Potier S."/>
            <person name="Richard G.-F."/>
            <person name="Straub M.-L."/>
            <person name="Suleau A."/>
            <person name="Swennen D."/>
            <person name="Tekaia F."/>
            <person name="Wesolowski-Louvel M."/>
            <person name="Westhof E."/>
            <person name="Wirth B."/>
            <person name="Zeniou-Meyer M."/>
            <person name="Zivanovic Y."/>
            <person name="Bolotin-Fukuhara M."/>
            <person name="Thierry A."/>
            <person name="Bouchier C."/>
            <person name="Caudron B."/>
            <person name="Scarpelli C."/>
            <person name="Gaillardin C."/>
            <person name="Weissenbach J."/>
            <person name="Wincker P."/>
            <person name="Souciet J.-L."/>
        </authorList>
    </citation>
    <scope>NUCLEOTIDE SEQUENCE [LARGE SCALE GENOMIC DNA]</scope>
    <source>
        <strain>ATCC 8585 / CBS 2359 / DSM 70799 / NBRC 1267 / NRRL Y-1140 / WM37</strain>
    </source>
</reference>
<protein>
    <recommendedName>
        <fullName>DASH complex subunit DAD1</fullName>
    </recommendedName>
    <alternativeName>
        <fullName>Outer kinetochore protein DAD1</fullName>
    </alternativeName>
</protein>
<organism>
    <name type="scientific">Kluyveromyces lactis (strain ATCC 8585 / CBS 2359 / DSM 70799 / NBRC 1267 / NRRL Y-1140 / WM37)</name>
    <name type="common">Yeast</name>
    <name type="synonym">Candida sphaerica</name>
    <dbReference type="NCBI Taxonomy" id="284590"/>
    <lineage>
        <taxon>Eukaryota</taxon>
        <taxon>Fungi</taxon>
        <taxon>Dikarya</taxon>
        <taxon>Ascomycota</taxon>
        <taxon>Saccharomycotina</taxon>
        <taxon>Saccharomycetes</taxon>
        <taxon>Saccharomycetales</taxon>
        <taxon>Saccharomycetaceae</taxon>
        <taxon>Kluyveromyces</taxon>
    </lineage>
</organism>
<sequence length="95" mass="10779">MTEEVQQLSTGDKYFIEQRSLILQEINESMDAILNQLNGLNITLENSIAVGKEFENVSQIWKLFYNGLESEEQNMETVGVADSEHITEDVNPEGK</sequence>
<dbReference type="EMBL" id="CR382122">
    <property type="protein sequence ID" value="CAH02234.1"/>
    <property type="molecule type" value="Genomic_DNA"/>
</dbReference>
<dbReference type="RefSeq" id="XP_451841.1">
    <property type="nucleotide sequence ID" value="XM_451841.1"/>
</dbReference>
<dbReference type="SMR" id="Q6CW48"/>
<dbReference type="FunCoup" id="Q6CW48">
    <property type="interactions" value="39"/>
</dbReference>
<dbReference type="STRING" id="284590.Q6CW48"/>
<dbReference type="PaxDb" id="284590-Q6CW48"/>
<dbReference type="KEGG" id="kla:KLLA0_B06974g"/>
<dbReference type="eggNOG" id="ENOG502SBWQ">
    <property type="taxonomic scope" value="Eukaryota"/>
</dbReference>
<dbReference type="HOGENOM" id="CLU_142427_2_1_1"/>
<dbReference type="InParanoid" id="Q6CW48"/>
<dbReference type="OMA" id="ENVSELW"/>
<dbReference type="Proteomes" id="UP000000598">
    <property type="component" value="Chromosome B"/>
</dbReference>
<dbReference type="GO" id="GO:0005737">
    <property type="term" value="C:cytoplasm"/>
    <property type="evidence" value="ECO:0007669"/>
    <property type="project" value="UniProtKB-KW"/>
</dbReference>
<dbReference type="GO" id="GO:0042729">
    <property type="term" value="C:DASH complex"/>
    <property type="evidence" value="ECO:0000250"/>
    <property type="project" value="UniProtKB"/>
</dbReference>
<dbReference type="GO" id="GO:0072686">
    <property type="term" value="C:mitotic spindle"/>
    <property type="evidence" value="ECO:0007669"/>
    <property type="project" value="InterPro"/>
</dbReference>
<dbReference type="GO" id="GO:0044732">
    <property type="term" value="C:mitotic spindle pole body"/>
    <property type="evidence" value="ECO:0007669"/>
    <property type="project" value="TreeGrafter"/>
</dbReference>
<dbReference type="GO" id="GO:0005876">
    <property type="term" value="C:spindle microtubule"/>
    <property type="evidence" value="ECO:0007669"/>
    <property type="project" value="TreeGrafter"/>
</dbReference>
<dbReference type="GO" id="GO:0051010">
    <property type="term" value="F:microtubule plus-end binding"/>
    <property type="evidence" value="ECO:0007669"/>
    <property type="project" value="TreeGrafter"/>
</dbReference>
<dbReference type="GO" id="GO:0008608">
    <property type="term" value="P:attachment of spindle microtubules to kinetochore"/>
    <property type="evidence" value="ECO:0000250"/>
    <property type="project" value="UniProtKB"/>
</dbReference>
<dbReference type="GO" id="GO:0051301">
    <property type="term" value="P:cell division"/>
    <property type="evidence" value="ECO:0007669"/>
    <property type="project" value="UniProtKB-KW"/>
</dbReference>
<dbReference type="GO" id="GO:1990758">
    <property type="term" value="P:mitotic sister chromatid biorientation"/>
    <property type="evidence" value="ECO:0000250"/>
    <property type="project" value="UniProtKB"/>
</dbReference>
<dbReference type="GO" id="GO:1990976">
    <property type="term" value="P:protein transport along microtubule to mitotic spindle pole body"/>
    <property type="evidence" value="ECO:0000250"/>
    <property type="project" value="UniProtKB"/>
</dbReference>
<dbReference type="InterPro" id="IPR013958">
    <property type="entry name" value="DASH_Dad1"/>
</dbReference>
<dbReference type="PANTHER" id="PTHR28025">
    <property type="entry name" value="DASH COMPLEX SUBUNIT DAD1"/>
    <property type="match status" value="1"/>
</dbReference>
<dbReference type="PANTHER" id="PTHR28025:SF1">
    <property type="entry name" value="DASH COMPLEX SUBUNIT DAD1"/>
    <property type="match status" value="1"/>
</dbReference>
<dbReference type="Pfam" id="PF08649">
    <property type="entry name" value="DASH_Dad1"/>
    <property type="match status" value="1"/>
</dbReference>
<gene>
    <name type="primary">DAD1</name>
    <name type="ordered locus">KLLA0B06974g</name>
</gene>
<proteinExistence type="inferred from homology"/>
<name>DAD1_KLULA</name>
<keyword id="KW-0131">Cell cycle</keyword>
<keyword id="KW-0132">Cell division</keyword>
<keyword id="KW-0137">Centromere</keyword>
<keyword id="KW-0158">Chromosome</keyword>
<keyword id="KW-0159">Chromosome partition</keyword>
<keyword id="KW-0963">Cytoplasm</keyword>
<keyword id="KW-0206">Cytoskeleton</keyword>
<keyword id="KW-0995">Kinetochore</keyword>
<keyword id="KW-0493">Microtubule</keyword>
<keyword id="KW-0498">Mitosis</keyword>
<keyword id="KW-0539">Nucleus</keyword>
<keyword id="KW-1185">Reference proteome</keyword>
<accession>Q6CW48</accession>
<comment type="function">
    <text evidence="2">Component of the DASH complex that connects microtubules with kinetochores and couples microtubule depolymerisation to chromosome movement; it is involved in retrieving kinetochores to the spindle poles before their re-orientation on the spindle in early mitosis and allows microtubule depolymerization to pull chromosomes apart and resist detachment during anaphase. Kinetochores, consisting of a centromere-associated inner segment and a microtubule-contacting outer segment, play a crucial role in chromosome segregation by mediating the physical connection between centromeric DNA and microtubules. Kinetochores also serve as an input point for the spindle assembly checkpoint, which delays anaphase until all chromosomes have bioriented on the mitotic spindle.</text>
</comment>
<comment type="subunit">
    <text evidence="1 2">Component of the DASH complex consisting of ASK1, DAD1, DAD2, DAD3, DAD4, DAM1, DUO1, HSK3, SPC19 and SPC34, with a stoichiometry of one copy of each subunit per complex. Multiple DASH complexes oligomerize to form a ring that encircles spindle microtubules and organizes the rod-like NDC80 complexes of the outer kinetochore. DASH complex oligomerization strengthens microtubule attachments (By similarity). On cytoplasmic microtubules, DASH complexes appear to form patches instead of rings (By similarity).</text>
</comment>
<comment type="subcellular location">
    <subcellularLocation>
        <location evidence="2">Nucleus</location>
    </subcellularLocation>
    <subcellularLocation>
        <location evidence="2">Cytoplasm</location>
        <location evidence="2">Cytoskeleton</location>
        <location evidence="2">Spindle</location>
    </subcellularLocation>
    <subcellularLocation>
        <location evidence="2">Chromosome</location>
        <location evidence="2">Centromere</location>
        <location evidence="2">Kinetochore</location>
    </subcellularLocation>
</comment>
<comment type="similarity">
    <text evidence="3">Belongs to the DASH complex DAD1 family.</text>
</comment>
<evidence type="ECO:0000250" key="1">
    <source>
        <dbReference type="UniProtKB" id="P87297"/>
    </source>
</evidence>
<evidence type="ECO:0000250" key="2">
    <source>
        <dbReference type="UniProtKB" id="Q12248"/>
    </source>
</evidence>
<evidence type="ECO:0000305" key="3"/>